<sequence>MNHLVKVLIVVVAIALVLCEAQVNFSPGWGTGKRSAVQDSPCKGSAESLMYIYKLVQNEAQKILECEKFSSN</sequence>
<keyword id="KW-0027">Amidation</keyword>
<keyword id="KW-0165">Cleavage on pair of basic residues</keyword>
<keyword id="KW-0903">Direct protein sequencing</keyword>
<keyword id="KW-0372">Hormone</keyword>
<keyword id="KW-0527">Neuropeptide</keyword>
<keyword id="KW-0873">Pyrrolidone carboxylic acid</keyword>
<keyword id="KW-0964">Secreted</keyword>
<keyword id="KW-0732">Signal</keyword>
<proteinExistence type="evidence at protein level"/>
<name>HTF_BLADI</name>
<organism>
    <name type="scientific">Blaberus discoidalis</name>
    <name type="common">Tropical cockroach</name>
    <dbReference type="NCBI Taxonomy" id="6981"/>
    <lineage>
        <taxon>Eukaryota</taxon>
        <taxon>Metazoa</taxon>
        <taxon>Ecdysozoa</taxon>
        <taxon>Arthropoda</taxon>
        <taxon>Hexapoda</taxon>
        <taxon>Insecta</taxon>
        <taxon>Pterygota</taxon>
        <taxon>Neoptera</taxon>
        <taxon>Polyneoptera</taxon>
        <taxon>Dictyoptera</taxon>
        <taxon>Blattodea</taxon>
        <taxon>Blaberoidea</taxon>
        <taxon>Blaberidae</taxon>
        <taxon>Blaberinae</taxon>
        <taxon>Blaberus</taxon>
    </lineage>
</organism>
<feature type="signal peptide" evidence="2">
    <location>
        <begin position="1"/>
        <end position="21"/>
    </location>
</feature>
<feature type="chain" id="PRO_0000000929" description="Hypertrehalosaemic prohormone">
    <location>
        <begin position="22"/>
        <end position="72"/>
    </location>
</feature>
<feature type="peptide" id="PRO_0000000930" description="Hypertrehalosaemic hormone">
    <location>
        <begin position="22"/>
        <end position="31"/>
    </location>
</feature>
<feature type="peptide" id="PRO_0000000931" description="Hypertrehalosaemic hormone precursor-related peptide" evidence="1">
    <location>
        <begin position="35"/>
        <end position="72"/>
    </location>
</feature>
<feature type="modified residue" description="Pyrrolidone carboxylic acid" evidence="2">
    <location>
        <position position="22"/>
    </location>
</feature>
<feature type="modified residue" description="Threonine amide" evidence="2">
    <location>
        <position position="31"/>
    </location>
</feature>
<dbReference type="EMBL" id="U35277">
    <property type="protein sequence ID" value="AAA79691.1"/>
    <property type="molecule type" value="mRNA"/>
</dbReference>
<dbReference type="GO" id="GO:0005576">
    <property type="term" value="C:extracellular region"/>
    <property type="evidence" value="ECO:0007669"/>
    <property type="project" value="UniProtKB-SubCell"/>
</dbReference>
<dbReference type="GO" id="GO:0005179">
    <property type="term" value="F:hormone activity"/>
    <property type="evidence" value="ECO:0007669"/>
    <property type="project" value="UniProtKB-KW"/>
</dbReference>
<dbReference type="GO" id="GO:0007218">
    <property type="term" value="P:neuropeptide signaling pathway"/>
    <property type="evidence" value="ECO:0007669"/>
    <property type="project" value="UniProtKB-KW"/>
</dbReference>
<dbReference type="InterPro" id="IPR002047">
    <property type="entry name" value="Adipokinetic_hormone_CS"/>
</dbReference>
<dbReference type="InterPro" id="IPR010475">
    <property type="entry name" value="AKH/RPCH_hormone"/>
</dbReference>
<dbReference type="Pfam" id="PF06377">
    <property type="entry name" value="Adipokin_hormo"/>
    <property type="match status" value="1"/>
</dbReference>
<dbReference type="PROSITE" id="PS00256">
    <property type="entry name" value="AKH"/>
    <property type="match status" value="1"/>
</dbReference>
<comment type="function">
    <text>Hypertrehalosaemic factors are neuropeptides that elevate the level of trehalose in the hemolymph (trehalose is the major carbohydrate in the hemolymph of insects).</text>
</comment>
<comment type="subcellular location">
    <subcellularLocation>
        <location>Secreted</location>
    </subcellularLocation>
</comment>
<comment type="tissue specificity">
    <text evidence="3">Expressed in corpora cardiaca.</text>
</comment>
<comment type="similarity">
    <text evidence="4">Belongs to the AKH/HRTH/RPCH family.</text>
</comment>
<reference key="1">
    <citation type="journal article" date="1997" name="Mol. Cell. Endocrinol.">
        <title>Hypertrehalosemic hormone in a cockroach: molecular cloning and expression.</title>
        <authorList>
            <person name="Lewis D.K."/>
            <person name="Jezierski M.K."/>
            <person name="Keeley L.L."/>
            <person name="Bradfield J.Y."/>
        </authorList>
    </citation>
    <scope>NUCLEOTIDE SEQUENCE [MRNA]</scope>
    <scope>TISSUE SPECIFICITY</scope>
    <source>
        <tissue>Corpora cardiaca</tissue>
    </source>
</reference>
<reference key="2">
    <citation type="journal article" date="1986" name="Biochem. Biophys. Res. Commun.">
        <title>Insect hypertrehalosemic hormone: isolation and primary structure from Blaberus discoidalis cockroaches.</title>
        <authorList>
            <person name="Hayes T.K."/>
            <person name="Keeley L.L."/>
            <person name="Knight D.W."/>
        </authorList>
    </citation>
    <scope>PROTEIN SEQUENCE OF 22-31</scope>
    <scope>PYROGLUTAMATE FORMATION AT GLN-22</scope>
    <scope>AMIDATION AT THR-31</scope>
    <source>
        <tissue>Corpora cardiaca</tissue>
    </source>
</reference>
<evidence type="ECO:0000255" key="1"/>
<evidence type="ECO:0000269" key="2">
    <source>
    </source>
</evidence>
<evidence type="ECO:0000269" key="3">
    <source>
    </source>
</evidence>
<evidence type="ECO:0000305" key="4"/>
<protein>
    <recommendedName>
        <fullName>Hypertrehalosaemic prohormone</fullName>
    </recommendedName>
    <component>
        <recommendedName>
            <fullName>Hypertrehalosaemic hormone</fullName>
            <shortName>HTH</shortName>
        </recommendedName>
        <alternativeName>
            <fullName>Hypertrehalosaemic neuropeptide</fullName>
        </alternativeName>
    </component>
    <component>
        <recommendedName>
            <fullName>Hypertrehalosaemic hormone precursor-related peptide</fullName>
        </recommendedName>
    </component>
</protein>
<accession>Q17128</accession>